<feature type="chain" id="PRO_0000457519" description="Protein ZAR1-like 1.S">
    <location>
        <begin position="1"/>
        <end position="281"/>
    </location>
</feature>
<feature type="zinc finger region" description="3CxxC-type" evidence="2">
    <location>
        <begin position="183"/>
        <end position="267"/>
    </location>
</feature>
<feature type="mutagenesis site" description="Abolished binding to the 3'-UTR of mRNAs; when associated with A-217." evidence="3">
    <original>C</original>
    <variation>A</variation>
    <location>
        <position position="190"/>
    </location>
</feature>
<feature type="mutagenesis site" description="Abolished binding to the 3'-UTR of mRNAs; when associated with A-190." evidence="3">
    <original>C</original>
    <variation>A</variation>
    <location>
        <position position="217"/>
    </location>
</feature>
<proteinExistence type="evidence at protein level"/>
<keyword id="KW-0963">Cytoplasm</keyword>
<keyword id="KW-0217">Developmental protein</keyword>
<keyword id="KW-0221">Differentiation</keyword>
<keyword id="KW-0479">Metal-binding</keyword>
<keyword id="KW-0896">Oogenesis</keyword>
<keyword id="KW-1185">Reference proteome</keyword>
<keyword id="KW-0694">RNA-binding</keyword>
<keyword id="KW-0862">Zinc</keyword>
<keyword id="KW-0863">Zinc-finger</keyword>
<dbReference type="EMBL" id="CM004469">
    <property type="status" value="NOT_ANNOTATED_CDS"/>
    <property type="molecule type" value="Genomic_DNA"/>
</dbReference>
<dbReference type="RefSeq" id="XP_018105973.1">
    <property type="nucleotide sequence ID" value="XM_018250484.1"/>
</dbReference>
<dbReference type="PaxDb" id="8355-A0A1L8HBI7"/>
<dbReference type="GeneID" id="108710086"/>
<dbReference type="KEGG" id="xla:108710086"/>
<dbReference type="AGR" id="Xenbase:XB-GENE-17333865"/>
<dbReference type="CTD" id="108710086"/>
<dbReference type="Xenbase" id="XB-GENE-17333865">
    <property type="gene designation" value="zar1l2.S"/>
</dbReference>
<dbReference type="OMA" id="PYWKPPY"/>
<dbReference type="OrthoDB" id="9885288at2759"/>
<dbReference type="Proteomes" id="UP000186698">
    <property type="component" value="Chromosome 2S"/>
</dbReference>
<dbReference type="Proteomes" id="UP000694892">
    <property type="component" value="Chromosome 2S"/>
</dbReference>
<dbReference type="Bgee" id="108710086">
    <property type="expression patterns" value="Expressed in oocyte and 6 other cell types or tissues"/>
</dbReference>
<dbReference type="GO" id="GO:0005737">
    <property type="term" value="C:cytoplasm"/>
    <property type="evidence" value="ECO:0000318"/>
    <property type="project" value="GO_Central"/>
</dbReference>
<dbReference type="GO" id="GO:0036464">
    <property type="term" value="C:cytoplasmic ribonucleoprotein granule"/>
    <property type="evidence" value="ECO:0007669"/>
    <property type="project" value="UniProtKB-SubCell"/>
</dbReference>
<dbReference type="GO" id="GO:0003730">
    <property type="term" value="F:mRNA 3'-UTR binding"/>
    <property type="evidence" value="ECO:0000314"/>
    <property type="project" value="UniProtKB"/>
</dbReference>
<dbReference type="GO" id="GO:0008270">
    <property type="term" value="F:zinc ion binding"/>
    <property type="evidence" value="ECO:0007669"/>
    <property type="project" value="UniProtKB-KW"/>
</dbReference>
<dbReference type="GO" id="GO:0017148">
    <property type="term" value="P:negative regulation of translation"/>
    <property type="evidence" value="ECO:0000314"/>
    <property type="project" value="UniProtKB"/>
</dbReference>
<dbReference type="GO" id="GO:0001556">
    <property type="term" value="P:oocyte maturation"/>
    <property type="evidence" value="ECO:0000314"/>
    <property type="project" value="UniProtKB"/>
</dbReference>
<dbReference type="GO" id="GO:0006412">
    <property type="term" value="P:translation"/>
    <property type="evidence" value="ECO:0000318"/>
    <property type="project" value="GO_Central"/>
</dbReference>
<dbReference type="InterPro" id="IPR026775">
    <property type="entry name" value="Zar1"/>
</dbReference>
<dbReference type="InterPro" id="IPR027377">
    <property type="entry name" value="ZAR1/RTP1-5-like_Znf-3CxxC"/>
</dbReference>
<dbReference type="PANTHER" id="PTHR31054:SF7">
    <property type="entry name" value="PROTEIN ZAR1-LIKE 1.L"/>
    <property type="match status" value="1"/>
</dbReference>
<dbReference type="PANTHER" id="PTHR31054">
    <property type="entry name" value="ZYGOTE ARREST PROTEIN 1-LIKE ISOFORM X1"/>
    <property type="match status" value="1"/>
</dbReference>
<dbReference type="Pfam" id="PF13695">
    <property type="entry name" value="Zn_ribbon_3CxxC"/>
    <property type="match status" value="1"/>
</dbReference>
<dbReference type="SMART" id="SM01328">
    <property type="entry name" value="zf-3CxxC"/>
    <property type="match status" value="1"/>
</dbReference>
<evidence type="ECO:0000250" key="1">
    <source>
        <dbReference type="UniProtKB" id="Q80SU3"/>
    </source>
</evidence>
<evidence type="ECO:0000255" key="2"/>
<evidence type="ECO:0000269" key="3">
    <source>
    </source>
</evidence>
<evidence type="ECO:0000305" key="4"/>
<evidence type="ECO:0000312" key="5">
    <source>
        <dbReference type="Xenbase" id="XB-GENE-17333865"/>
    </source>
</evidence>
<gene>
    <name evidence="5" type="primary">zar1l.S</name>
</gene>
<name>ZA1LS_XENLA</name>
<sequence length="281" mass="32382">MAGLVYPQYPVFPGYRQPYRQLPPFYKPKQPYWKPPYKGVPGPMKPTNPLDCLDGYKWAQLKALLSQLGPEFGLGRRFTKEVGVQVNPRVDACIQCSLGPRTLKNCKGGPFLFHAVPGQHAGLGIIAPVRFPRTTAVYSRLSDRRLFTLPTPTYGGKKEGGTQMDPVEEDLLLKRPTFQFLEQKYGFFQCKDCQIRWESAYVWCVSGTNKVYFKQFCHKCQKGHNPYYVESIECKRCKKAWCSCPERRHIDLKRPHCQDLCGRCKGQRLSCDKTFSFKYII</sequence>
<reference key="1">
    <citation type="journal article" date="2016" name="Nature">
        <title>Genome evolution in the allotetraploid frog Xenopus laevis.</title>
        <authorList>
            <person name="Session A.M."/>
            <person name="Uno Y."/>
            <person name="Kwon T."/>
            <person name="Chapman J.A."/>
            <person name="Toyoda A."/>
            <person name="Takahashi S."/>
            <person name="Fukui A."/>
            <person name="Hikosaka A."/>
            <person name="Suzuki A."/>
            <person name="Kondo M."/>
            <person name="van Heeringen S.J."/>
            <person name="Quigley I."/>
            <person name="Heinz S."/>
            <person name="Ogino H."/>
            <person name="Ochi H."/>
            <person name="Hellsten U."/>
            <person name="Lyons J.B."/>
            <person name="Simakov O."/>
            <person name="Putnam N."/>
            <person name="Stites J."/>
            <person name="Kuroki Y."/>
            <person name="Tanaka T."/>
            <person name="Michiue T."/>
            <person name="Watanabe M."/>
            <person name="Bogdanovic O."/>
            <person name="Lister R."/>
            <person name="Georgiou G."/>
            <person name="Paranjpe S.S."/>
            <person name="van Kruijsbergen I."/>
            <person name="Shu S."/>
            <person name="Carlson J."/>
            <person name="Kinoshita T."/>
            <person name="Ohta Y."/>
            <person name="Mawaribuchi S."/>
            <person name="Jenkins J."/>
            <person name="Grimwood J."/>
            <person name="Schmutz J."/>
            <person name="Mitros T."/>
            <person name="Mozaffari S.V."/>
            <person name="Suzuki Y."/>
            <person name="Haramoto Y."/>
            <person name="Yamamoto T.S."/>
            <person name="Takagi C."/>
            <person name="Heald R."/>
            <person name="Miller K."/>
            <person name="Haudenschild C."/>
            <person name="Kitzman J."/>
            <person name="Nakayama T."/>
            <person name="Izutsu Y."/>
            <person name="Robert J."/>
            <person name="Fortriede J."/>
            <person name="Burns K."/>
            <person name="Lotay V."/>
            <person name="Karimi K."/>
            <person name="Yasuoka Y."/>
            <person name="Dichmann D.S."/>
            <person name="Flajnik M.F."/>
            <person name="Houston D.W."/>
            <person name="Shendure J."/>
            <person name="DuPasquier L."/>
            <person name="Vize P.D."/>
            <person name="Zorn A.M."/>
            <person name="Ito M."/>
            <person name="Marcotte E.M."/>
            <person name="Wallingford J.B."/>
            <person name="Ito Y."/>
            <person name="Asashima M."/>
            <person name="Ueno N."/>
            <person name="Matsuda Y."/>
            <person name="Veenstra G.J."/>
            <person name="Fujiyama A."/>
            <person name="Harland R.M."/>
            <person name="Taira M."/>
            <person name="Rokhsar D.S."/>
        </authorList>
    </citation>
    <scope>NUCLEOTIDE SEQUENCE [LARGE SCALE GENOMIC DNA]</scope>
    <source>
        <strain>J</strain>
    </source>
</reference>
<reference key="2">
    <citation type="journal article" date="2022" name="Development">
        <title>The translation regulator Zar1l controls timing of meiosis in Xenopus oocytes.</title>
        <authorList>
            <person name="Heim A."/>
            <person name="Niedermeier M.L."/>
            <person name="Stengel F."/>
            <person name="Mayer T.U."/>
        </authorList>
    </citation>
    <scope>FUNCTION</scope>
    <scope>SUBCELLULAR LOCATION</scope>
    <scope>IDENTIFICATION IN A CYTOPLASMIC RIBONUCLEOPROTEIN COMPLEX</scope>
    <scope>TISSUE SPECIFICITY</scope>
    <scope>DEVELOPMENTAL STAGE</scope>
    <scope>DOMAIN</scope>
    <scope>MUTAGENESIS OF CYS-190 AND CYS-217</scope>
</reference>
<organism>
    <name type="scientific">Xenopus laevis</name>
    <name type="common">African clawed frog</name>
    <dbReference type="NCBI Taxonomy" id="8355"/>
    <lineage>
        <taxon>Eukaryota</taxon>
        <taxon>Metazoa</taxon>
        <taxon>Chordata</taxon>
        <taxon>Craniata</taxon>
        <taxon>Vertebrata</taxon>
        <taxon>Euteleostomi</taxon>
        <taxon>Amphibia</taxon>
        <taxon>Batrachia</taxon>
        <taxon>Anura</taxon>
        <taxon>Pipoidea</taxon>
        <taxon>Pipidae</taxon>
        <taxon>Xenopodinae</taxon>
        <taxon>Xenopus</taxon>
        <taxon>Xenopus</taxon>
    </lineage>
</organism>
<accession>A0A1L8HBI7</accession>
<protein>
    <recommendedName>
        <fullName evidence="4">Protein ZAR1-like 1.S</fullName>
    </recommendedName>
    <alternativeName>
        <fullName evidence="4">Zygote arrest protein 1-like 1.S</fullName>
    </alternativeName>
</protein>
<comment type="function">
    <text evidence="1 3">mRNA-binding protein required for maternal mRNA storage, translation and degradation during oocyte maturation (PubMed:36278895). Controls timing of meiosis during oogenesis (PubMed:36278895). Probably promotes formation of some phase-separated membraneless compartment that stores maternal mRNAs in oocytes: acts by undergoing liquid-liquid phase separation upon binding to maternal mRNAs (By similarity). Binds to the 3'-UTR of maternal mRNAs, inhibiting their translation (PubMed:36278895).</text>
</comment>
<comment type="subunit">
    <text evidence="3">Component of a cytoplasmic ribonucleoprotein complex together with eif4enif1/4E-T and cpeb1.</text>
</comment>
<comment type="subcellular location">
    <subcellularLocation>
        <location evidence="3">Cytoplasm</location>
        <location evidence="3">Cytoplasmic ribonucleoprotein granule</location>
    </subcellularLocation>
</comment>
<comment type="tissue specificity">
    <text evidence="3">Expressed in oocytes.</text>
</comment>
<comment type="developmental stage">
    <text evidence="3">Expressed in stage VI oocytes; its levels clearly decrease after progesterone addition.</text>
</comment>
<comment type="domain">
    <text evidence="1">Disordered regions undergo liquid-liquid phase separation (LLPS) for the formation of membraneless compartments that store maternal mRNAs in oocytes.</text>
</comment>
<comment type="domain">
    <text evidence="3">The 3CxxC-type mediates binding to the 3'-UTR of mRNAs.</text>
</comment>
<comment type="similarity">
    <text evidence="4">Belongs to the ZAR1 family.</text>
</comment>